<dbReference type="EMBL" id="AF292116">
    <property type="protein sequence ID" value="AAK00287.1"/>
    <property type="molecule type" value="mRNA"/>
</dbReference>
<dbReference type="FunCoup" id="Q791F6">
    <property type="interactions" value="881"/>
</dbReference>
<dbReference type="STRING" id="10116.ENSRNOP00000022534"/>
<dbReference type="GlyCosmos" id="Q791F6">
    <property type="glycosylation" value="2 sites, No reported glycans"/>
</dbReference>
<dbReference type="GlyGen" id="Q791F6">
    <property type="glycosylation" value="3 sites"/>
</dbReference>
<dbReference type="PhosphoSitePlus" id="Q791F6"/>
<dbReference type="PaxDb" id="10116-ENSRNOP00000022534"/>
<dbReference type="UCSC" id="RGD:620858">
    <property type="organism name" value="rat"/>
</dbReference>
<dbReference type="AGR" id="RGD:620858"/>
<dbReference type="RGD" id="620858">
    <property type="gene designation" value="Tpra1"/>
</dbReference>
<dbReference type="eggNOG" id="KOG4536">
    <property type="taxonomic scope" value="Eukaryota"/>
</dbReference>
<dbReference type="InParanoid" id="Q791F6"/>
<dbReference type="OrthoDB" id="10027388at2759"/>
<dbReference type="PhylomeDB" id="Q791F6"/>
<dbReference type="PRO" id="PR:Q791F6"/>
<dbReference type="Proteomes" id="UP000002494">
    <property type="component" value="Unplaced"/>
</dbReference>
<dbReference type="GO" id="GO:0005886">
    <property type="term" value="C:plasma membrane"/>
    <property type="evidence" value="ECO:0000314"/>
    <property type="project" value="MGI"/>
</dbReference>
<dbReference type="GO" id="GO:0004930">
    <property type="term" value="F:G protein-coupled receptor activity"/>
    <property type="evidence" value="ECO:0000318"/>
    <property type="project" value="GO_Central"/>
</dbReference>
<dbReference type="GO" id="GO:0040016">
    <property type="term" value="P:embryonic cleavage"/>
    <property type="evidence" value="ECO:0000266"/>
    <property type="project" value="RGD"/>
</dbReference>
<dbReference type="GO" id="GO:0007186">
    <property type="term" value="P:G protein-coupled receptor signaling pathway"/>
    <property type="evidence" value="ECO:0000318"/>
    <property type="project" value="GO_Central"/>
</dbReference>
<dbReference type="GO" id="GO:1901991">
    <property type="term" value="P:negative regulation of mitotic cell cycle phase transition"/>
    <property type="evidence" value="ECO:0000266"/>
    <property type="project" value="RGD"/>
</dbReference>
<dbReference type="InterPro" id="IPR018781">
    <property type="entry name" value="TPRA1/CAND2/CAND8"/>
</dbReference>
<dbReference type="PANTHER" id="PTHR15876">
    <property type="entry name" value="TRANSMEMBRANE PROTEIN ADIPOCYTE-ASSOCIATED 1"/>
    <property type="match status" value="1"/>
</dbReference>
<dbReference type="PANTHER" id="PTHR15876:SF8">
    <property type="entry name" value="TRANSMEMBRANE PROTEIN ADIPOCYTE-ASSOCIATED 1"/>
    <property type="match status" value="1"/>
</dbReference>
<dbReference type="Pfam" id="PF10160">
    <property type="entry name" value="Tmemb_40"/>
    <property type="match status" value="1"/>
</dbReference>
<proteinExistence type="evidence at transcript level"/>
<feature type="chain" id="PRO_0000076101" description="Transmembrane protein adipocyte-associated 1">
    <location>
        <begin position="1"/>
        <end position="369"/>
    </location>
</feature>
<feature type="transmembrane region" description="Helical; Name=1" evidence="1">
    <location>
        <begin position="45"/>
        <end position="65"/>
    </location>
</feature>
<feature type="transmembrane region" description="Helical; Name=2" evidence="1">
    <location>
        <begin position="73"/>
        <end position="93"/>
    </location>
</feature>
<feature type="transmembrane region" description="Helical; Name=3" evidence="1">
    <location>
        <begin position="120"/>
        <end position="140"/>
    </location>
</feature>
<feature type="transmembrane region" description="Helical; Name=4" evidence="1">
    <location>
        <begin position="148"/>
        <end position="168"/>
    </location>
</feature>
<feature type="transmembrane region" description="Helical; Name=5" evidence="1">
    <location>
        <begin position="189"/>
        <end position="209"/>
    </location>
</feature>
<feature type="transmembrane region" description="Helical; Name=6" evidence="1">
    <location>
        <begin position="237"/>
        <end position="257"/>
    </location>
</feature>
<feature type="transmembrane region" description="Helical; Name=7" evidence="1">
    <location>
        <begin position="262"/>
        <end position="282"/>
    </location>
</feature>
<feature type="glycosylation site" description="N-linked (GlcNAc...) asparagine" evidence="1">
    <location>
        <position position="20"/>
    </location>
</feature>
<feature type="glycosylation site" description="N-linked (GlcNAc...) asparagine" evidence="1">
    <location>
        <position position="329"/>
    </location>
</feature>
<accession>Q791F6</accession>
<gene>
    <name type="primary">Tpra1</name>
    <name type="synonym">Gpr175</name>
    <name type="synonym">Tpra40</name>
</gene>
<sequence length="369" mass="40578">MASLQEANGSTAWPPPTASNISEPHQCLLLLYEDIGSSRVRYWDLLLLIPNVLFFIFLLWKLPLARAKIRVTSSPIFITFYILVFVVALVGIARAVVSMTVSASDAATVADKILWEITRFFLLAIELSVIILGLAFGHLESKSSIKRVLAITTVLSLAYSVTQGTLEILYPDSHLSAEDFNIYGHGGRQFWLVSSCFFFLVYSLVVILPKTPLKERVSLPSRRSFYVYAGILATLNLLQGLGSALLCANIIVGLCCVDATTFLYFSFFAPLIYVAFLRGFFGSEPKILFSYKCQVDEAEEPDMHLPQPYAVARREGIESAGPACASAANYSSTQFDSAGVAYLDDIASMPCHTGSINSTDSERWKAINA</sequence>
<keyword id="KW-0325">Glycoprotein</keyword>
<keyword id="KW-0472">Membrane</keyword>
<keyword id="KW-1185">Reference proteome</keyword>
<keyword id="KW-0812">Transmembrane</keyword>
<keyword id="KW-1133">Transmembrane helix</keyword>
<evidence type="ECO:0000255" key="1"/>
<evidence type="ECO:0000305" key="2"/>
<organism>
    <name type="scientific">Rattus norvegicus</name>
    <name type="common">Rat</name>
    <dbReference type="NCBI Taxonomy" id="10116"/>
    <lineage>
        <taxon>Eukaryota</taxon>
        <taxon>Metazoa</taxon>
        <taxon>Chordata</taxon>
        <taxon>Craniata</taxon>
        <taxon>Vertebrata</taxon>
        <taxon>Euteleostomi</taxon>
        <taxon>Mammalia</taxon>
        <taxon>Eutheria</taxon>
        <taxon>Euarchontoglires</taxon>
        <taxon>Glires</taxon>
        <taxon>Rodentia</taxon>
        <taxon>Myomorpha</taxon>
        <taxon>Muroidea</taxon>
        <taxon>Muridae</taxon>
        <taxon>Murinae</taxon>
        <taxon>Rattus</taxon>
    </lineage>
</organism>
<name>TPRA1_RAT</name>
<comment type="subcellular location">
    <subcellularLocation>
        <location>Membrane</location>
        <topology>Multi-pass membrane protein</topology>
    </subcellularLocation>
</comment>
<comment type="induction">
    <text>Decreased throughout ischemic hypoxia and reoxygenation.</text>
</comment>
<comment type="similarity">
    <text evidence="2">Belongs to the UPF0359 family.</text>
</comment>
<reference key="1">
    <citation type="journal article" date="2001" name="Biochim. Biophys. Acta">
        <title>Molecular cloning of rat transmembrane domain protein of 40-kDa regulated in adipocytes and its expression in H9c2 cells exposed to ischemic hypoxia and reoxygenation.</title>
        <authorList>
            <person name="Fujimoto K."/>
            <person name="Mizukami Y."/>
            <person name="Kimura M."/>
            <person name="Mogami K."/>
            <person name="Todoroki-Ikeda N."/>
            <person name="Kobayashi S."/>
            <person name="Matsuzaki M."/>
        </authorList>
    </citation>
    <scope>NUCLEOTIDE SEQUENCE [MRNA]</scope>
    <source>
        <strain>BDIX</strain>
    </source>
</reference>
<protein>
    <recommendedName>
        <fullName>Transmembrane protein adipocyte-associated 1</fullName>
    </recommendedName>
    <alternativeName>
        <fullName>Integral membrane protein GPR175</fullName>
    </alternativeName>
    <alternativeName>
        <fullName>TPRA40</fullName>
    </alternativeName>
    <alternativeName>
        <fullName>Transmembrane domain protein of 40 kDa regulated in adipocytes</fullName>
    </alternativeName>
</protein>